<evidence type="ECO:0000255" key="1">
    <source>
        <dbReference type="HAMAP-Rule" id="MF_00121"/>
    </source>
</evidence>
<organism>
    <name type="scientific">Carboxydothermus hydrogenoformans (strain ATCC BAA-161 / DSM 6008 / Z-2901)</name>
    <dbReference type="NCBI Taxonomy" id="246194"/>
    <lineage>
        <taxon>Bacteria</taxon>
        <taxon>Bacillati</taxon>
        <taxon>Bacillota</taxon>
        <taxon>Clostridia</taxon>
        <taxon>Thermoanaerobacterales</taxon>
        <taxon>Thermoanaerobacteraceae</taxon>
        <taxon>Carboxydothermus</taxon>
    </lineage>
</organism>
<dbReference type="EC" id="6.3.5.-" evidence="1"/>
<dbReference type="EMBL" id="CP000141">
    <property type="protein sequence ID" value="ABB14382.1"/>
    <property type="molecule type" value="Genomic_DNA"/>
</dbReference>
<dbReference type="RefSeq" id="WP_011344025.1">
    <property type="nucleotide sequence ID" value="NC_007503.1"/>
</dbReference>
<dbReference type="SMR" id="Q3AD35"/>
<dbReference type="FunCoup" id="Q3AD35">
    <property type="interactions" value="437"/>
</dbReference>
<dbReference type="STRING" id="246194.CHY_1103"/>
<dbReference type="KEGG" id="chy:CHY_1103"/>
<dbReference type="eggNOG" id="COG0064">
    <property type="taxonomic scope" value="Bacteria"/>
</dbReference>
<dbReference type="HOGENOM" id="CLU_019240_0_0_9"/>
<dbReference type="InParanoid" id="Q3AD35"/>
<dbReference type="Proteomes" id="UP000002706">
    <property type="component" value="Chromosome"/>
</dbReference>
<dbReference type="GO" id="GO:0050566">
    <property type="term" value="F:asparaginyl-tRNA synthase (glutamine-hydrolyzing) activity"/>
    <property type="evidence" value="ECO:0007669"/>
    <property type="project" value="RHEA"/>
</dbReference>
<dbReference type="GO" id="GO:0005524">
    <property type="term" value="F:ATP binding"/>
    <property type="evidence" value="ECO:0007669"/>
    <property type="project" value="UniProtKB-KW"/>
</dbReference>
<dbReference type="GO" id="GO:0050567">
    <property type="term" value="F:glutaminyl-tRNA synthase (glutamine-hydrolyzing) activity"/>
    <property type="evidence" value="ECO:0007669"/>
    <property type="project" value="UniProtKB-UniRule"/>
</dbReference>
<dbReference type="GO" id="GO:0070681">
    <property type="term" value="P:glutaminyl-tRNAGln biosynthesis via transamidation"/>
    <property type="evidence" value="ECO:0007669"/>
    <property type="project" value="TreeGrafter"/>
</dbReference>
<dbReference type="GO" id="GO:0006412">
    <property type="term" value="P:translation"/>
    <property type="evidence" value="ECO:0007669"/>
    <property type="project" value="UniProtKB-UniRule"/>
</dbReference>
<dbReference type="FunFam" id="1.10.10.410:FF:000001">
    <property type="entry name" value="Aspartyl/glutamyl-tRNA(Asn/Gln) amidotransferase subunit B"/>
    <property type="match status" value="1"/>
</dbReference>
<dbReference type="FunFam" id="1.10.150.380:FF:000001">
    <property type="entry name" value="Aspartyl/glutamyl-tRNA(Asn/Gln) amidotransferase subunit B"/>
    <property type="match status" value="1"/>
</dbReference>
<dbReference type="Gene3D" id="1.10.10.410">
    <property type="match status" value="1"/>
</dbReference>
<dbReference type="Gene3D" id="1.10.150.380">
    <property type="entry name" value="GatB domain, N-terminal subdomain"/>
    <property type="match status" value="1"/>
</dbReference>
<dbReference type="HAMAP" id="MF_00121">
    <property type="entry name" value="GatB"/>
    <property type="match status" value="1"/>
</dbReference>
<dbReference type="InterPro" id="IPR017959">
    <property type="entry name" value="Asn/Gln-tRNA_amidoTrfase_suB/E"/>
</dbReference>
<dbReference type="InterPro" id="IPR006075">
    <property type="entry name" value="Asn/Gln-tRNA_Trfase_suB/E_cat"/>
</dbReference>
<dbReference type="InterPro" id="IPR018027">
    <property type="entry name" value="Asn/Gln_amidotransferase"/>
</dbReference>
<dbReference type="InterPro" id="IPR003789">
    <property type="entry name" value="Asn/Gln_tRNA_amidoTrase-B-like"/>
</dbReference>
<dbReference type="InterPro" id="IPR004413">
    <property type="entry name" value="GatB"/>
</dbReference>
<dbReference type="InterPro" id="IPR042114">
    <property type="entry name" value="GatB_C_1"/>
</dbReference>
<dbReference type="InterPro" id="IPR023168">
    <property type="entry name" value="GatB_Yqey_C_2"/>
</dbReference>
<dbReference type="InterPro" id="IPR017958">
    <property type="entry name" value="Gln-tRNA_amidoTrfase_suB_CS"/>
</dbReference>
<dbReference type="InterPro" id="IPR014746">
    <property type="entry name" value="Gln_synth/guanido_kin_cat_dom"/>
</dbReference>
<dbReference type="NCBIfam" id="TIGR00133">
    <property type="entry name" value="gatB"/>
    <property type="match status" value="1"/>
</dbReference>
<dbReference type="NCBIfam" id="NF004012">
    <property type="entry name" value="PRK05477.1-2"/>
    <property type="match status" value="1"/>
</dbReference>
<dbReference type="NCBIfam" id="NF004014">
    <property type="entry name" value="PRK05477.1-4"/>
    <property type="match status" value="1"/>
</dbReference>
<dbReference type="NCBIfam" id="NF004015">
    <property type="entry name" value="PRK05477.1-5"/>
    <property type="match status" value="1"/>
</dbReference>
<dbReference type="PANTHER" id="PTHR11659">
    <property type="entry name" value="GLUTAMYL-TRNA GLN AMIDOTRANSFERASE SUBUNIT B MITOCHONDRIAL AND PROKARYOTIC PET112-RELATED"/>
    <property type="match status" value="1"/>
</dbReference>
<dbReference type="PANTHER" id="PTHR11659:SF0">
    <property type="entry name" value="GLUTAMYL-TRNA(GLN) AMIDOTRANSFERASE SUBUNIT B, MITOCHONDRIAL"/>
    <property type="match status" value="1"/>
</dbReference>
<dbReference type="Pfam" id="PF02934">
    <property type="entry name" value="GatB_N"/>
    <property type="match status" value="1"/>
</dbReference>
<dbReference type="Pfam" id="PF02637">
    <property type="entry name" value="GatB_Yqey"/>
    <property type="match status" value="1"/>
</dbReference>
<dbReference type="SMART" id="SM00845">
    <property type="entry name" value="GatB_Yqey"/>
    <property type="match status" value="1"/>
</dbReference>
<dbReference type="SUPFAM" id="SSF89095">
    <property type="entry name" value="GatB/YqeY motif"/>
    <property type="match status" value="1"/>
</dbReference>
<dbReference type="SUPFAM" id="SSF55931">
    <property type="entry name" value="Glutamine synthetase/guanido kinase"/>
    <property type="match status" value="1"/>
</dbReference>
<dbReference type="PROSITE" id="PS01234">
    <property type="entry name" value="GATB"/>
    <property type="match status" value="1"/>
</dbReference>
<reference key="1">
    <citation type="journal article" date="2005" name="PLoS Genet.">
        <title>Life in hot carbon monoxide: the complete genome sequence of Carboxydothermus hydrogenoformans Z-2901.</title>
        <authorList>
            <person name="Wu M."/>
            <person name="Ren Q."/>
            <person name="Durkin A.S."/>
            <person name="Daugherty S.C."/>
            <person name="Brinkac L.M."/>
            <person name="Dodson R.J."/>
            <person name="Madupu R."/>
            <person name="Sullivan S.A."/>
            <person name="Kolonay J.F."/>
            <person name="Nelson W.C."/>
            <person name="Tallon L.J."/>
            <person name="Jones K.M."/>
            <person name="Ulrich L.E."/>
            <person name="Gonzalez J.M."/>
            <person name="Zhulin I.B."/>
            <person name="Robb F.T."/>
            <person name="Eisen J.A."/>
        </authorList>
    </citation>
    <scope>NUCLEOTIDE SEQUENCE [LARGE SCALE GENOMIC DNA]</scope>
    <source>
        <strain>ATCC BAA-161 / DSM 6008 / Z-2901</strain>
    </source>
</reference>
<accession>Q3AD35</accession>
<gene>
    <name evidence="1" type="primary">gatB</name>
    <name type="ordered locus">CHY_1103</name>
</gene>
<name>GATB_CARHZ</name>
<sequence length="481" mass="54405">MREYEAVIGLEVHVELKTNTKIFCNCSTEFGGDPNSHVCPVCLGLPGVLPVLNKKVVDYAIKAALALNCEVAEYCKFDRKNYYYPDLPKNYQISQYDLPLAKNGYLEIEVDGQVKRIGITRIHMEEDAGKLVHQGNLAVTPYSLVDYNRTGVPLIEIVSAPDIRTPEEARLYLEKLKAIIQYTGISDCRMEEGSLRCDANVSVRPKGQKEFGTKTEIKNMNSFKALQKALEYEIARQIEILEEGGRIIQETRMWDESRQVTLSMRSKEEAHDYRYFPEPDLPPVVIDREWLEEIRATLPELPDARKKRFVEQYGLTPYDAHVLTLTRELADYYEEAAKGYSNPKAVANWVINELLRLLNAAGKEITECPIKPEQITKMLELLDKGTISGKIAKTVFEEMFSSGKDPEVIVKEKGLVQITDLGELEAVVDKVIAANPKAVEDYKNGKEKALGFLVGQIMKETRGRANPEAVNQLLRDKLAKL</sequence>
<keyword id="KW-0067">ATP-binding</keyword>
<keyword id="KW-0436">Ligase</keyword>
<keyword id="KW-0547">Nucleotide-binding</keyword>
<keyword id="KW-0648">Protein biosynthesis</keyword>
<keyword id="KW-1185">Reference proteome</keyword>
<protein>
    <recommendedName>
        <fullName evidence="1">Aspartyl/glutamyl-tRNA(Asn/Gln) amidotransferase subunit B</fullName>
        <shortName evidence="1">Asp/Glu-ADT subunit B</shortName>
        <ecNumber evidence="1">6.3.5.-</ecNumber>
    </recommendedName>
</protein>
<proteinExistence type="inferred from homology"/>
<feature type="chain" id="PRO_0000241207" description="Aspartyl/glutamyl-tRNA(Asn/Gln) amidotransferase subunit B">
    <location>
        <begin position="1"/>
        <end position="481"/>
    </location>
</feature>
<comment type="function">
    <text evidence="1">Allows the formation of correctly charged Asn-tRNA(Asn) or Gln-tRNA(Gln) through the transamidation of misacylated Asp-tRNA(Asn) or Glu-tRNA(Gln) in organisms which lack either or both of asparaginyl-tRNA or glutaminyl-tRNA synthetases. The reaction takes place in the presence of glutamine and ATP through an activated phospho-Asp-tRNA(Asn) or phospho-Glu-tRNA(Gln).</text>
</comment>
<comment type="catalytic activity">
    <reaction evidence="1">
        <text>L-glutamyl-tRNA(Gln) + L-glutamine + ATP + H2O = L-glutaminyl-tRNA(Gln) + L-glutamate + ADP + phosphate + H(+)</text>
        <dbReference type="Rhea" id="RHEA:17521"/>
        <dbReference type="Rhea" id="RHEA-COMP:9681"/>
        <dbReference type="Rhea" id="RHEA-COMP:9684"/>
        <dbReference type="ChEBI" id="CHEBI:15377"/>
        <dbReference type="ChEBI" id="CHEBI:15378"/>
        <dbReference type="ChEBI" id="CHEBI:29985"/>
        <dbReference type="ChEBI" id="CHEBI:30616"/>
        <dbReference type="ChEBI" id="CHEBI:43474"/>
        <dbReference type="ChEBI" id="CHEBI:58359"/>
        <dbReference type="ChEBI" id="CHEBI:78520"/>
        <dbReference type="ChEBI" id="CHEBI:78521"/>
        <dbReference type="ChEBI" id="CHEBI:456216"/>
    </reaction>
</comment>
<comment type="catalytic activity">
    <reaction evidence="1">
        <text>L-aspartyl-tRNA(Asn) + L-glutamine + ATP + H2O = L-asparaginyl-tRNA(Asn) + L-glutamate + ADP + phosphate + 2 H(+)</text>
        <dbReference type="Rhea" id="RHEA:14513"/>
        <dbReference type="Rhea" id="RHEA-COMP:9674"/>
        <dbReference type="Rhea" id="RHEA-COMP:9677"/>
        <dbReference type="ChEBI" id="CHEBI:15377"/>
        <dbReference type="ChEBI" id="CHEBI:15378"/>
        <dbReference type="ChEBI" id="CHEBI:29985"/>
        <dbReference type="ChEBI" id="CHEBI:30616"/>
        <dbReference type="ChEBI" id="CHEBI:43474"/>
        <dbReference type="ChEBI" id="CHEBI:58359"/>
        <dbReference type="ChEBI" id="CHEBI:78515"/>
        <dbReference type="ChEBI" id="CHEBI:78516"/>
        <dbReference type="ChEBI" id="CHEBI:456216"/>
    </reaction>
</comment>
<comment type="subunit">
    <text evidence="1">Heterotrimer of A, B and C subunits.</text>
</comment>
<comment type="similarity">
    <text evidence="1">Belongs to the GatB/GatE family. GatB subfamily.</text>
</comment>